<accession>C3L7T5</accession>
<feature type="chain" id="PRO_1000194465" description="Ribonuclease PH">
    <location>
        <begin position="1"/>
        <end position="245"/>
    </location>
</feature>
<feature type="binding site" evidence="1">
    <location>
        <position position="86"/>
    </location>
    <ligand>
        <name>phosphate</name>
        <dbReference type="ChEBI" id="CHEBI:43474"/>
        <note>substrate</note>
    </ligand>
</feature>
<feature type="binding site" evidence="1">
    <location>
        <begin position="124"/>
        <end position="126"/>
    </location>
    <ligand>
        <name>phosphate</name>
        <dbReference type="ChEBI" id="CHEBI:43474"/>
        <note>substrate</note>
    </ligand>
</feature>
<proteinExistence type="inferred from homology"/>
<protein>
    <recommendedName>
        <fullName evidence="1">Ribonuclease PH</fullName>
        <shortName evidence="1">RNase PH</shortName>
        <ecNumber evidence="1">2.7.7.56</ecNumber>
    </recommendedName>
    <alternativeName>
        <fullName evidence="1">tRNA nucleotidyltransferase</fullName>
    </alternativeName>
</protein>
<reference key="1">
    <citation type="submission" date="2008-10" db="EMBL/GenBank/DDBJ databases">
        <title>Genome sequence of Bacillus anthracis str. CDC 684.</title>
        <authorList>
            <person name="Dodson R.J."/>
            <person name="Munk A.C."/>
            <person name="Brettin T."/>
            <person name="Bruce D."/>
            <person name="Detter C."/>
            <person name="Tapia R."/>
            <person name="Han C."/>
            <person name="Sutton G."/>
            <person name="Sims D."/>
        </authorList>
    </citation>
    <scope>NUCLEOTIDE SEQUENCE [LARGE SCALE GENOMIC DNA]</scope>
    <source>
        <strain>CDC 684 / NRRL 3495</strain>
    </source>
</reference>
<keyword id="KW-0548">Nucleotidyltransferase</keyword>
<keyword id="KW-0694">RNA-binding</keyword>
<keyword id="KW-0698">rRNA processing</keyword>
<keyword id="KW-0808">Transferase</keyword>
<keyword id="KW-0819">tRNA processing</keyword>
<keyword id="KW-0820">tRNA-binding</keyword>
<comment type="function">
    <text evidence="1">Phosphorolytic 3'-5' exoribonuclease that plays an important role in tRNA 3'-end maturation. Removes nucleotide residues following the 3'-CCA terminus of tRNAs; can also add nucleotides to the ends of RNA molecules by using nucleoside diphosphates as substrates, but this may not be physiologically important. Probably plays a role in initiation of 16S rRNA degradation (leading to ribosome degradation) during starvation.</text>
</comment>
<comment type="catalytic activity">
    <reaction evidence="1">
        <text>tRNA(n+1) + phosphate = tRNA(n) + a ribonucleoside 5'-diphosphate</text>
        <dbReference type="Rhea" id="RHEA:10628"/>
        <dbReference type="Rhea" id="RHEA-COMP:17343"/>
        <dbReference type="Rhea" id="RHEA-COMP:17344"/>
        <dbReference type="ChEBI" id="CHEBI:43474"/>
        <dbReference type="ChEBI" id="CHEBI:57930"/>
        <dbReference type="ChEBI" id="CHEBI:173114"/>
        <dbReference type="EC" id="2.7.7.56"/>
    </reaction>
</comment>
<comment type="subunit">
    <text evidence="1">Homohexameric ring arranged as a trimer of dimers.</text>
</comment>
<comment type="similarity">
    <text evidence="1">Belongs to the RNase PH family.</text>
</comment>
<sequence>MRVDGREKTELRHIHIHTNYLKHPEGSVLIEVGDTKVICSATIEERVPPFMRGEGKGWVTAEYAMIPRATEQRTIRESSKGKVTGRTMEIQRLIGRALRAVVDLEALGERTVWIDCDVIQADGGTRTASITGAYVAMVLAFEKLLQAEKVSKIPVKDYLAATSVGIVEEQGVVLDLNYAEDSKADVDMNVIMTGKGQFVEVQGTGEEATFSRAQLNELLDAAEQGIFQLIDIQKEALGDIVSHIE</sequence>
<name>RNPH_BACAC</name>
<dbReference type="EC" id="2.7.7.56" evidence="1"/>
<dbReference type="EMBL" id="CP001215">
    <property type="protein sequence ID" value="ACP14503.1"/>
    <property type="molecule type" value="Genomic_DNA"/>
</dbReference>
<dbReference type="RefSeq" id="WP_001261764.1">
    <property type="nucleotide sequence ID" value="NC_012581.1"/>
</dbReference>
<dbReference type="SMR" id="C3L7T5"/>
<dbReference type="GeneID" id="45024354"/>
<dbReference type="KEGG" id="bah:BAMEG_4751"/>
<dbReference type="HOGENOM" id="CLU_050858_0_0_9"/>
<dbReference type="GO" id="GO:0000175">
    <property type="term" value="F:3'-5'-RNA exonuclease activity"/>
    <property type="evidence" value="ECO:0007669"/>
    <property type="project" value="UniProtKB-UniRule"/>
</dbReference>
<dbReference type="GO" id="GO:0000049">
    <property type="term" value="F:tRNA binding"/>
    <property type="evidence" value="ECO:0007669"/>
    <property type="project" value="UniProtKB-UniRule"/>
</dbReference>
<dbReference type="GO" id="GO:0009022">
    <property type="term" value="F:tRNA nucleotidyltransferase activity"/>
    <property type="evidence" value="ECO:0007669"/>
    <property type="project" value="UniProtKB-UniRule"/>
</dbReference>
<dbReference type="GO" id="GO:0016075">
    <property type="term" value="P:rRNA catabolic process"/>
    <property type="evidence" value="ECO:0007669"/>
    <property type="project" value="UniProtKB-UniRule"/>
</dbReference>
<dbReference type="GO" id="GO:0006364">
    <property type="term" value="P:rRNA processing"/>
    <property type="evidence" value="ECO:0007669"/>
    <property type="project" value="UniProtKB-KW"/>
</dbReference>
<dbReference type="GO" id="GO:0008033">
    <property type="term" value="P:tRNA processing"/>
    <property type="evidence" value="ECO:0007669"/>
    <property type="project" value="UniProtKB-UniRule"/>
</dbReference>
<dbReference type="CDD" id="cd11362">
    <property type="entry name" value="RNase_PH_bact"/>
    <property type="match status" value="1"/>
</dbReference>
<dbReference type="FunFam" id="3.30.230.70:FF:000003">
    <property type="entry name" value="Ribonuclease PH"/>
    <property type="match status" value="1"/>
</dbReference>
<dbReference type="Gene3D" id="3.30.230.70">
    <property type="entry name" value="GHMP Kinase, N-terminal domain"/>
    <property type="match status" value="1"/>
</dbReference>
<dbReference type="HAMAP" id="MF_00564">
    <property type="entry name" value="RNase_PH"/>
    <property type="match status" value="1"/>
</dbReference>
<dbReference type="InterPro" id="IPR001247">
    <property type="entry name" value="ExoRNase_PH_dom1"/>
</dbReference>
<dbReference type="InterPro" id="IPR015847">
    <property type="entry name" value="ExoRNase_PH_dom2"/>
</dbReference>
<dbReference type="InterPro" id="IPR036345">
    <property type="entry name" value="ExoRNase_PH_dom2_sf"/>
</dbReference>
<dbReference type="InterPro" id="IPR027408">
    <property type="entry name" value="PNPase/RNase_PH_dom_sf"/>
</dbReference>
<dbReference type="InterPro" id="IPR020568">
    <property type="entry name" value="Ribosomal_Su5_D2-typ_SF"/>
</dbReference>
<dbReference type="InterPro" id="IPR050080">
    <property type="entry name" value="RNase_PH"/>
</dbReference>
<dbReference type="InterPro" id="IPR002381">
    <property type="entry name" value="RNase_PH_bac-type"/>
</dbReference>
<dbReference type="InterPro" id="IPR018336">
    <property type="entry name" value="RNase_PH_CS"/>
</dbReference>
<dbReference type="NCBIfam" id="TIGR01966">
    <property type="entry name" value="RNasePH"/>
    <property type="match status" value="1"/>
</dbReference>
<dbReference type="PANTHER" id="PTHR11953">
    <property type="entry name" value="EXOSOME COMPLEX COMPONENT"/>
    <property type="match status" value="1"/>
</dbReference>
<dbReference type="PANTHER" id="PTHR11953:SF0">
    <property type="entry name" value="EXOSOME COMPLEX COMPONENT RRP41"/>
    <property type="match status" value="1"/>
</dbReference>
<dbReference type="Pfam" id="PF01138">
    <property type="entry name" value="RNase_PH"/>
    <property type="match status" value="1"/>
</dbReference>
<dbReference type="Pfam" id="PF03725">
    <property type="entry name" value="RNase_PH_C"/>
    <property type="match status" value="1"/>
</dbReference>
<dbReference type="SUPFAM" id="SSF55666">
    <property type="entry name" value="Ribonuclease PH domain 2-like"/>
    <property type="match status" value="1"/>
</dbReference>
<dbReference type="SUPFAM" id="SSF54211">
    <property type="entry name" value="Ribosomal protein S5 domain 2-like"/>
    <property type="match status" value="1"/>
</dbReference>
<dbReference type="PROSITE" id="PS01277">
    <property type="entry name" value="RIBONUCLEASE_PH"/>
    <property type="match status" value="1"/>
</dbReference>
<evidence type="ECO:0000255" key="1">
    <source>
        <dbReference type="HAMAP-Rule" id="MF_00564"/>
    </source>
</evidence>
<gene>
    <name evidence="1" type="primary">rph</name>
    <name type="ordered locus">BAMEG_4751</name>
</gene>
<organism>
    <name type="scientific">Bacillus anthracis (strain CDC 684 / NRRL 3495)</name>
    <dbReference type="NCBI Taxonomy" id="568206"/>
    <lineage>
        <taxon>Bacteria</taxon>
        <taxon>Bacillati</taxon>
        <taxon>Bacillota</taxon>
        <taxon>Bacilli</taxon>
        <taxon>Bacillales</taxon>
        <taxon>Bacillaceae</taxon>
        <taxon>Bacillus</taxon>
        <taxon>Bacillus cereus group</taxon>
    </lineage>
</organism>